<organism>
    <name type="scientific">Bacillus thuringiensis (strain Al Hakam)</name>
    <dbReference type="NCBI Taxonomy" id="412694"/>
    <lineage>
        <taxon>Bacteria</taxon>
        <taxon>Bacillati</taxon>
        <taxon>Bacillota</taxon>
        <taxon>Bacilli</taxon>
        <taxon>Bacillales</taxon>
        <taxon>Bacillaceae</taxon>
        <taxon>Bacillus</taxon>
        <taxon>Bacillus cereus group</taxon>
    </lineage>
</organism>
<comment type="function">
    <text evidence="1">Catalyzes the rearrangement of 1-deoxy-D-xylulose 5-phosphate (DXP) to produce the thiazole phosphate moiety of thiamine. Sulfur is provided by the thiocarboxylate moiety of the carrier protein ThiS. In vitro, sulfur can be provided by H(2)S.</text>
</comment>
<comment type="catalytic activity">
    <reaction evidence="1">
        <text>[ThiS sulfur-carrier protein]-C-terminal-Gly-aminoethanethioate + 2-iminoacetate + 1-deoxy-D-xylulose 5-phosphate = [ThiS sulfur-carrier protein]-C-terminal Gly-Gly + 2-[(2R,5Z)-2-carboxy-4-methylthiazol-5(2H)-ylidene]ethyl phosphate + 2 H2O + H(+)</text>
        <dbReference type="Rhea" id="RHEA:26297"/>
        <dbReference type="Rhea" id="RHEA-COMP:12909"/>
        <dbReference type="Rhea" id="RHEA-COMP:19908"/>
        <dbReference type="ChEBI" id="CHEBI:15377"/>
        <dbReference type="ChEBI" id="CHEBI:15378"/>
        <dbReference type="ChEBI" id="CHEBI:57792"/>
        <dbReference type="ChEBI" id="CHEBI:62899"/>
        <dbReference type="ChEBI" id="CHEBI:77846"/>
        <dbReference type="ChEBI" id="CHEBI:90778"/>
        <dbReference type="ChEBI" id="CHEBI:232372"/>
        <dbReference type="EC" id="2.8.1.10"/>
    </reaction>
</comment>
<comment type="pathway">
    <text evidence="1">Cofactor biosynthesis; thiamine diphosphate biosynthesis.</text>
</comment>
<comment type="subunit">
    <text evidence="1">Homotetramer. Forms heterodimers with either ThiH or ThiS.</text>
</comment>
<comment type="subcellular location">
    <subcellularLocation>
        <location evidence="1">Cytoplasm</location>
    </subcellularLocation>
</comment>
<comment type="similarity">
    <text evidence="1">Belongs to the ThiG family.</text>
</comment>
<sequence length="258" mass="27444">MIMLNIGPFSFHSRLLLGTGKFPDFDVQQKAIDVSEAEVLTFAVRRMDIFDAKQPNLLEKLDVKKYKLLPNTAGAKNAEEAVRIAKLAKASGLCDMIKVEVIGDDRTLLPDPVETLKASEMLLEEGFIVLPYTSDDVVLARKLQELGVHAIMPGASPIGSGLGIVNPLNLSFIIEQATVPVIVDAGIGSPADAAFAMELGADGVLLNTAVSGAKDPIKMAQAMKLSIEAGRLGFEAGRIARKRCATASSPLEGMSVVE</sequence>
<gene>
    <name evidence="1" type="primary">thiG</name>
    <name type="ordered locus">BALH_0669</name>
</gene>
<keyword id="KW-0963">Cytoplasm</keyword>
<keyword id="KW-0704">Schiff base</keyword>
<keyword id="KW-0784">Thiamine biosynthesis</keyword>
<keyword id="KW-0808">Transferase</keyword>
<reference key="1">
    <citation type="journal article" date="2007" name="J. Bacteriol.">
        <title>The complete genome sequence of Bacillus thuringiensis Al Hakam.</title>
        <authorList>
            <person name="Challacombe J.F."/>
            <person name="Altherr M.R."/>
            <person name="Xie G."/>
            <person name="Bhotika S.S."/>
            <person name="Brown N."/>
            <person name="Bruce D."/>
            <person name="Campbell C.S."/>
            <person name="Campbell M.L."/>
            <person name="Chen J."/>
            <person name="Chertkov O."/>
            <person name="Cleland C."/>
            <person name="Dimitrijevic M."/>
            <person name="Doggett N.A."/>
            <person name="Fawcett J.J."/>
            <person name="Glavina T."/>
            <person name="Goodwin L.A."/>
            <person name="Green L.D."/>
            <person name="Han C.S."/>
            <person name="Hill K.K."/>
            <person name="Hitchcock P."/>
            <person name="Jackson P.J."/>
            <person name="Keim P."/>
            <person name="Kewalramani A.R."/>
            <person name="Longmire J."/>
            <person name="Lucas S."/>
            <person name="Malfatti S."/>
            <person name="Martinez D."/>
            <person name="McMurry K."/>
            <person name="Meincke L.J."/>
            <person name="Misra M."/>
            <person name="Moseman B.L."/>
            <person name="Mundt M."/>
            <person name="Munk A.C."/>
            <person name="Okinaka R.T."/>
            <person name="Parson-Quintana B."/>
            <person name="Reilly L.P."/>
            <person name="Richardson P."/>
            <person name="Robinson D.L."/>
            <person name="Saunders E."/>
            <person name="Tapia R."/>
            <person name="Tesmer J.G."/>
            <person name="Thayer N."/>
            <person name="Thompson L.S."/>
            <person name="Tice H."/>
            <person name="Ticknor L.O."/>
            <person name="Wills P.L."/>
            <person name="Gilna P."/>
            <person name="Brettin T.S."/>
        </authorList>
    </citation>
    <scope>NUCLEOTIDE SEQUENCE [LARGE SCALE GENOMIC DNA]</scope>
    <source>
        <strain>Al Hakam</strain>
    </source>
</reference>
<dbReference type="EC" id="2.8.1.10" evidence="1"/>
<dbReference type="EMBL" id="CP000485">
    <property type="protein sequence ID" value="ABK84051.1"/>
    <property type="molecule type" value="Genomic_DNA"/>
</dbReference>
<dbReference type="SMR" id="A0RA08"/>
<dbReference type="KEGG" id="btl:BALH_0669"/>
<dbReference type="HOGENOM" id="CLU_062233_1_0_9"/>
<dbReference type="UniPathway" id="UPA00060"/>
<dbReference type="GO" id="GO:0005737">
    <property type="term" value="C:cytoplasm"/>
    <property type="evidence" value="ECO:0007669"/>
    <property type="project" value="UniProtKB-SubCell"/>
</dbReference>
<dbReference type="GO" id="GO:1990107">
    <property type="term" value="F:thiazole synthase activity"/>
    <property type="evidence" value="ECO:0007669"/>
    <property type="project" value="UniProtKB-EC"/>
</dbReference>
<dbReference type="GO" id="GO:0009229">
    <property type="term" value="P:thiamine diphosphate biosynthetic process"/>
    <property type="evidence" value="ECO:0007669"/>
    <property type="project" value="UniProtKB-UniRule"/>
</dbReference>
<dbReference type="CDD" id="cd04728">
    <property type="entry name" value="ThiG"/>
    <property type="match status" value="1"/>
</dbReference>
<dbReference type="FunFam" id="3.20.20.70:FF:000049">
    <property type="entry name" value="Thiazole synthase"/>
    <property type="match status" value="1"/>
</dbReference>
<dbReference type="Gene3D" id="3.20.20.70">
    <property type="entry name" value="Aldolase class I"/>
    <property type="match status" value="1"/>
</dbReference>
<dbReference type="HAMAP" id="MF_00443">
    <property type="entry name" value="ThiG"/>
    <property type="match status" value="1"/>
</dbReference>
<dbReference type="InterPro" id="IPR013785">
    <property type="entry name" value="Aldolase_TIM"/>
</dbReference>
<dbReference type="InterPro" id="IPR033983">
    <property type="entry name" value="Thiazole_synthase_ThiG"/>
</dbReference>
<dbReference type="InterPro" id="IPR008867">
    <property type="entry name" value="ThiG"/>
</dbReference>
<dbReference type="PANTHER" id="PTHR34266">
    <property type="entry name" value="THIAZOLE SYNTHASE"/>
    <property type="match status" value="1"/>
</dbReference>
<dbReference type="PANTHER" id="PTHR34266:SF2">
    <property type="entry name" value="THIAZOLE SYNTHASE"/>
    <property type="match status" value="1"/>
</dbReference>
<dbReference type="Pfam" id="PF05690">
    <property type="entry name" value="ThiG"/>
    <property type="match status" value="1"/>
</dbReference>
<dbReference type="SUPFAM" id="SSF110399">
    <property type="entry name" value="ThiG-like"/>
    <property type="match status" value="1"/>
</dbReference>
<accession>A0RA08</accession>
<proteinExistence type="inferred from homology"/>
<feature type="chain" id="PRO_1000025993" description="Thiazole synthase">
    <location>
        <begin position="1"/>
        <end position="258"/>
    </location>
</feature>
<feature type="active site" description="Schiff-base intermediate with DXP" evidence="1">
    <location>
        <position position="98"/>
    </location>
</feature>
<feature type="binding site" evidence="1">
    <location>
        <position position="159"/>
    </location>
    <ligand>
        <name>1-deoxy-D-xylulose 5-phosphate</name>
        <dbReference type="ChEBI" id="CHEBI:57792"/>
    </ligand>
</feature>
<feature type="binding site" evidence="1">
    <location>
        <begin position="185"/>
        <end position="186"/>
    </location>
    <ligand>
        <name>1-deoxy-D-xylulose 5-phosphate</name>
        <dbReference type="ChEBI" id="CHEBI:57792"/>
    </ligand>
</feature>
<feature type="binding site" evidence="1">
    <location>
        <begin position="207"/>
        <end position="208"/>
    </location>
    <ligand>
        <name>1-deoxy-D-xylulose 5-phosphate</name>
        <dbReference type="ChEBI" id="CHEBI:57792"/>
    </ligand>
</feature>
<name>THIG_BACAH</name>
<protein>
    <recommendedName>
        <fullName evidence="1">Thiazole synthase</fullName>
        <ecNumber evidence="1">2.8.1.10</ecNumber>
    </recommendedName>
</protein>
<evidence type="ECO:0000255" key="1">
    <source>
        <dbReference type="HAMAP-Rule" id="MF_00443"/>
    </source>
</evidence>